<sequence>MLQPKRTKFRKVHKGRNRGIASGTEVSFGTYGLKAVGRCRLTARQIEAARRAMSRAVKRQGKIWIRVFPDKPITEKPLEVRMGKGKGNVEYWVALIQPGKVLYEMDGVSEEVARNAFALAAAKLPVKTTFVTKTVM</sequence>
<reference key="1">
    <citation type="journal article" date="2007" name="Genome Biol.">
        <title>Characterization and modeling of the Haemophilus influenzae core and supragenomes based on the complete genomic sequences of Rd and 12 clinical nontypeable strains.</title>
        <authorList>
            <person name="Hogg J.S."/>
            <person name="Hu F.Z."/>
            <person name="Janto B."/>
            <person name="Boissy R."/>
            <person name="Hayes J."/>
            <person name="Keefe R."/>
            <person name="Post J.C."/>
            <person name="Ehrlich G.D."/>
        </authorList>
    </citation>
    <scope>NUCLEOTIDE SEQUENCE [LARGE SCALE GENOMIC DNA]</scope>
    <source>
        <strain>PittGG</strain>
    </source>
</reference>
<accession>A5UHT7</accession>
<dbReference type="EMBL" id="CP000672">
    <property type="protein sequence ID" value="ABR00343.1"/>
    <property type="molecule type" value="Genomic_DNA"/>
</dbReference>
<dbReference type="SMR" id="A5UHT7"/>
<dbReference type="KEGG" id="hiq:CGSHiGG_07420"/>
<dbReference type="HOGENOM" id="CLU_078858_2_1_6"/>
<dbReference type="Proteomes" id="UP000001990">
    <property type="component" value="Chromosome"/>
</dbReference>
<dbReference type="GO" id="GO:0022625">
    <property type="term" value="C:cytosolic large ribosomal subunit"/>
    <property type="evidence" value="ECO:0007669"/>
    <property type="project" value="TreeGrafter"/>
</dbReference>
<dbReference type="GO" id="GO:0019843">
    <property type="term" value="F:rRNA binding"/>
    <property type="evidence" value="ECO:0007669"/>
    <property type="project" value="UniProtKB-UniRule"/>
</dbReference>
<dbReference type="GO" id="GO:0003735">
    <property type="term" value="F:structural constituent of ribosome"/>
    <property type="evidence" value="ECO:0007669"/>
    <property type="project" value="InterPro"/>
</dbReference>
<dbReference type="GO" id="GO:0000049">
    <property type="term" value="F:tRNA binding"/>
    <property type="evidence" value="ECO:0007669"/>
    <property type="project" value="UniProtKB-KW"/>
</dbReference>
<dbReference type="GO" id="GO:0006412">
    <property type="term" value="P:translation"/>
    <property type="evidence" value="ECO:0007669"/>
    <property type="project" value="UniProtKB-UniRule"/>
</dbReference>
<dbReference type="CDD" id="cd01433">
    <property type="entry name" value="Ribosomal_L16_L10e"/>
    <property type="match status" value="1"/>
</dbReference>
<dbReference type="FunFam" id="3.90.1170.10:FF:000001">
    <property type="entry name" value="50S ribosomal protein L16"/>
    <property type="match status" value="1"/>
</dbReference>
<dbReference type="Gene3D" id="3.90.1170.10">
    <property type="entry name" value="Ribosomal protein L10e/L16"/>
    <property type="match status" value="1"/>
</dbReference>
<dbReference type="HAMAP" id="MF_01342">
    <property type="entry name" value="Ribosomal_uL16"/>
    <property type="match status" value="1"/>
</dbReference>
<dbReference type="InterPro" id="IPR047873">
    <property type="entry name" value="Ribosomal_uL16"/>
</dbReference>
<dbReference type="InterPro" id="IPR000114">
    <property type="entry name" value="Ribosomal_uL16_bact-type"/>
</dbReference>
<dbReference type="InterPro" id="IPR020798">
    <property type="entry name" value="Ribosomal_uL16_CS"/>
</dbReference>
<dbReference type="InterPro" id="IPR016180">
    <property type="entry name" value="Ribosomal_uL16_dom"/>
</dbReference>
<dbReference type="InterPro" id="IPR036920">
    <property type="entry name" value="Ribosomal_uL16_sf"/>
</dbReference>
<dbReference type="NCBIfam" id="TIGR01164">
    <property type="entry name" value="rplP_bact"/>
    <property type="match status" value="1"/>
</dbReference>
<dbReference type="PANTHER" id="PTHR12220">
    <property type="entry name" value="50S/60S RIBOSOMAL PROTEIN L16"/>
    <property type="match status" value="1"/>
</dbReference>
<dbReference type="PANTHER" id="PTHR12220:SF13">
    <property type="entry name" value="LARGE RIBOSOMAL SUBUNIT PROTEIN UL16M"/>
    <property type="match status" value="1"/>
</dbReference>
<dbReference type="Pfam" id="PF00252">
    <property type="entry name" value="Ribosomal_L16"/>
    <property type="match status" value="1"/>
</dbReference>
<dbReference type="PRINTS" id="PR00060">
    <property type="entry name" value="RIBOSOMALL16"/>
</dbReference>
<dbReference type="SUPFAM" id="SSF54686">
    <property type="entry name" value="Ribosomal protein L16p/L10e"/>
    <property type="match status" value="1"/>
</dbReference>
<dbReference type="PROSITE" id="PS00586">
    <property type="entry name" value="RIBOSOMAL_L16_1"/>
    <property type="match status" value="1"/>
</dbReference>
<dbReference type="PROSITE" id="PS00701">
    <property type="entry name" value="RIBOSOMAL_L16_2"/>
    <property type="match status" value="1"/>
</dbReference>
<gene>
    <name evidence="1" type="primary">rplP</name>
    <name type="ordered locus">CGSHiGG_07420</name>
</gene>
<keyword id="KW-0687">Ribonucleoprotein</keyword>
<keyword id="KW-0689">Ribosomal protein</keyword>
<keyword id="KW-0694">RNA-binding</keyword>
<keyword id="KW-0699">rRNA-binding</keyword>
<keyword id="KW-0820">tRNA-binding</keyword>
<name>RL16_HAEIG</name>
<organism>
    <name type="scientific">Haemophilus influenzae (strain PittGG)</name>
    <dbReference type="NCBI Taxonomy" id="374931"/>
    <lineage>
        <taxon>Bacteria</taxon>
        <taxon>Pseudomonadati</taxon>
        <taxon>Pseudomonadota</taxon>
        <taxon>Gammaproteobacteria</taxon>
        <taxon>Pasteurellales</taxon>
        <taxon>Pasteurellaceae</taxon>
        <taxon>Haemophilus</taxon>
    </lineage>
</organism>
<comment type="function">
    <text evidence="1">Binds 23S rRNA and is also seen to make contacts with the A and possibly P site tRNAs.</text>
</comment>
<comment type="subunit">
    <text evidence="1">Part of the 50S ribosomal subunit.</text>
</comment>
<comment type="similarity">
    <text evidence="1">Belongs to the universal ribosomal protein uL16 family.</text>
</comment>
<proteinExistence type="inferred from homology"/>
<protein>
    <recommendedName>
        <fullName evidence="1">Large ribosomal subunit protein uL16</fullName>
    </recommendedName>
    <alternativeName>
        <fullName evidence="2">50S ribosomal protein L16</fullName>
    </alternativeName>
</protein>
<feature type="chain" id="PRO_1000054630" description="Large ribosomal subunit protein uL16">
    <location>
        <begin position="1"/>
        <end position="136"/>
    </location>
</feature>
<evidence type="ECO:0000255" key="1">
    <source>
        <dbReference type="HAMAP-Rule" id="MF_01342"/>
    </source>
</evidence>
<evidence type="ECO:0000305" key="2"/>